<protein>
    <recommendedName>
        <fullName evidence="1">Urease subunit beta</fullName>
        <ecNumber evidence="1">3.5.1.5</ecNumber>
    </recommendedName>
    <alternativeName>
        <fullName evidence="1">Urea amidohydrolase subunit beta</fullName>
    </alternativeName>
</protein>
<reference key="1">
    <citation type="journal article" date="1990" name="Mol. Microbiol.">
        <title>Ureaplasma urealyticum urease genes; use of a UGA tryptophan codon.</title>
        <authorList>
            <person name="Blanchard A."/>
        </authorList>
    </citation>
    <scope>NUCLEOTIDE SEQUENCE [GENOMIC DNA]</scope>
    <source>
        <strain>ATCC 27618 / CIP 103755 / NCTC 10177 / T960 / Serovar 8</strain>
    </source>
</reference>
<reference key="2">
    <citation type="journal article" date="1991" name="Infect. Immun.">
        <title>Isolation and detection of urease genes in Ureaplasma urealyticum.</title>
        <authorList>
            <person name="Willoughby J.J."/>
            <person name="Russell W.C."/>
            <person name="Thirkell D."/>
            <person name="Burdon M.G."/>
        </authorList>
    </citation>
    <scope>NUCLEOTIDE SEQUENCE [GENOMIC DNA]</scope>
    <scope>PROTEIN SEQUENCE OF 2-36</scope>
    <source>
        <strain>ATCC 27618 / CIP 103755 / NCTC 10177 / T960 / Serovar 8</strain>
    </source>
</reference>
<reference key="3">
    <citation type="journal article" date="1999" name="Int. J. Syst. Bacteriol.">
        <title>Phylogenetic analysis of Ureaplasma urealyticum -- support for the establishment of a new species, Ureaplasma parvum.</title>
        <authorList>
            <person name="Kong F."/>
            <person name="James G."/>
            <person name="Ma Z."/>
            <person name="Gordon S."/>
            <person name="Wang B."/>
            <person name="Gilbert G.L."/>
        </authorList>
    </citation>
    <scope>NUCLEOTIDE SEQUENCE [GENOMIC DNA]</scope>
    <source>
        <strain>ATCC 27618 / CIP 103755 / NCTC 10177 / T960 / Serovar 8</strain>
        <strain>ATCC 27814 / 23 / Serovar 2</strain>
        <strain>ATCC 27816 / 58 / Serovar 4</strain>
        <strain>ATCC 27817 / 354 / Serovar 5</strain>
        <strain>ATCC 27819 / Co / Serovar 7</strain>
        <strain>ATCC 33175 / Vancouver / Serovar 9</strain>
        <strain>ATCC 33695 / K2 / Serovar 11</strain>
        <strain>ATCC 33696 / U24 / Serovar 12</strain>
        <strain>ATCC 33698 / U38 / Serovar 13</strain>
    </source>
</reference>
<name>URE2_UREUR</name>
<sequence length="124" mass="13608">MSGSSNQFTPGKLVPGAINFAEGEIVMNEGREAKVISIKNTGDRPIQVGSHFHLFETNSALVFFDEKGNEDKERKVAYGRRFDIPSGTAIRFEPGDKKEVSVIDLVGTREVWGVNGLVNGKLKK</sequence>
<proteinExistence type="evidence at protein level"/>
<evidence type="ECO:0000255" key="1">
    <source>
        <dbReference type="HAMAP-Rule" id="MF_01954"/>
    </source>
</evidence>
<evidence type="ECO:0000269" key="2">
    <source>
    </source>
</evidence>
<evidence type="ECO:0000305" key="3"/>
<accession>P0CB01</accession>
<accession>P17273</accession>
<accession>Q9WVU8</accession>
<dbReference type="EC" id="3.5.1.5" evidence="1"/>
<dbReference type="EMBL" id="X51315">
    <property type="protein sequence ID" value="CAA35696.1"/>
    <property type="molecule type" value="Genomic_DNA"/>
</dbReference>
<dbReference type="EMBL" id="M36190">
    <property type="protein sequence ID" value="AAA79776.1"/>
    <property type="molecule type" value="Genomic_DNA"/>
</dbReference>
<dbReference type="EMBL" id="AF085720">
    <property type="protein sequence ID" value="AAD28105.1"/>
    <property type="molecule type" value="Genomic_DNA"/>
</dbReference>
<dbReference type="EMBL" id="AF085721">
    <property type="protein sequence ID" value="AAD28108.1"/>
    <property type="molecule type" value="Genomic_DNA"/>
</dbReference>
<dbReference type="EMBL" id="AF085722">
    <property type="protein sequence ID" value="AAD28111.1"/>
    <property type="molecule type" value="Genomic_DNA"/>
</dbReference>
<dbReference type="EMBL" id="AF085723">
    <property type="protein sequence ID" value="AAD28114.1"/>
    <property type="molecule type" value="Genomic_DNA"/>
</dbReference>
<dbReference type="EMBL" id="AF085724">
    <property type="protein sequence ID" value="AAD28117.1"/>
    <property type="molecule type" value="Genomic_DNA"/>
</dbReference>
<dbReference type="EMBL" id="AF085725">
    <property type="protein sequence ID" value="AAD28120.1"/>
    <property type="molecule type" value="Genomic_DNA"/>
</dbReference>
<dbReference type="EMBL" id="AF085727">
    <property type="protein sequence ID" value="AAD28126.1"/>
    <property type="molecule type" value="Genomic_DNA"/>
</dbReference>
<dbReference type="EMBL" id="AF085728">
    <property type="protein sequence ID" value="AAD28129.1"/>
    <property type="molecule type" value="Genomic_DNA"/>
</dbReference>
<dbReference type="EMBL" id="AF085729">
    <property type="protein sequence ID" value="AAD28132.1"/>
    <property type="molecule type" value="Genomic_DNA"/>
</dbReference>
<dbReference type="PIR" id="S10031">
    <property type="entry name" value="S10031"/>
</dbReference>
<dbReference type="RefSeq" id="WP_004025930.1">
    <property type="nucleotide sequence ID" value="NZ_QOKT01000007.1"/>
</dbReference>
<dbReference type="SMR" id="P0CB01"/>
<dbReference type="GeneID" id="93848950"/>
<dbReference type="OMA" id="FYEVNDA"/>
<dbReference type="UniPathway" id="UPA00258">
    <property type="reaction ID" value="UER00370"/>
</dbReference>
<dbReference type="GO" id="GO:0035550">
    <property type="term" value="C:urease complex"/>
    <property type="evidence" value="ECO:0007669"/>
    <property type="project" value="InterPro"/>
</dbReference>
<dbReference type="GO" id="GO:0009039">
    <property type="term" value="F:urease activity"/>
    <property type="evidence" value="ECO:0007669"/>
    <property type="project" value="UniProtKB-UniRule"/>
</dbReference>
<dbReference type="GO" id="GO:0043419">
    <property type="term" value="P:urea catabolic process"/>
    <property type="evidence" value="ECO:0007669"/>
    <property type="project" value="UniProtKB-UniRule"/>
</dbReference>
<dbReference type="CDD" id="cd00407">
    <property type="entry name" value="Urease_beta"/>
    <property type="match status" value="1"/>
</dbReference>
<dbReference type="Gene3D" id="2.10.150.10">
    <property type="entry name" value="Urease, beta subunit"/>
    <property type="match status" value="1"/>
</dbReference>
<dbReference type="HAMAP" id="MF_01954">
    <property type="entry name" value="Urease_beta"/>
    <property type="match status" value="1"/>
</dbReference>
<dbReference type="InterPro" id="IPR002019">
    <property type="entry name" value="Urease_beta-like"/>
</dbReference>
<dbReference type="InterPro" id="IPR036461">
    <property type="entry name" value="Urease_betasu_sf"/>
</dbReference>
<dbReference type="InterPro" id="IPR050069">
    <property type="entry name" value="Urease_subunit"/>
</dbReference>
<dbReference type="NCBIfam" id="TIGR00192">
    <property type="entry name" value="urease_beta"/>
    <property type="match status" value="1"/>
</dbReference>
<dbReference type="PANTHER" id="PTHR33569">
    <property type="entry name" value="UREASE"/>
    <property type="match status" value="1"/>
</dbReference>
<dbReference type="PANTHER" id="PTHR33569:SF1">
    <property type="entry name" value="UREASE"/>
    <property type="match status" value="1"/>
</dbReference>
<dbReference type="Pfam" id="PF00699">
    <property type="entry name" value="Urease_beta"/>
    <property type="match status" value="1"/>
</dbReference>
<dbReference type="SUPFAM" id="SSF51278">
    <property type="entry name" value="Urease, beta-subunit"/>
    <property type="match status" value="1"/>
</dbReference>
<keyword id="KW-0963">Cytoplasm</keyword>
<keyword id="KW-0903">Direct protein sequencing</keyword>
<keyword id="KW-0378">Hydrolase</keyword>
<organism>
    <name type="scientific">Ureaplasma urealyticum</name>
    <name type="common">Ureaplasma urealyticum biotype 2</name>
    <dbReference type="NCBI Taxonomy" id="2130"/>
    <lineage>
        <taxon>Bacteria</taxon>
        <taxon>Bacillati</taxon>
        <taxon>Mycoplasmatota</taxon>
        <taxon>Mycoplasmoidales</taxon>
        <taxon>Mycoplasmoidaceae</taxon>
        <taxon>Ureaplasma</taxon>
    </lineage>
</organism>
<feature type="initiator methionine" description="Removed" evidence="2">
    <location>
        <position position="1"/>
    </location>
</feature>
<feature type="chain" id="PRO_0000067584" description="Urease subunit beta">
    <location>
        <begin position="2"/>
        <end position="124"/>
    </location>
</feature>
<feature type="sequence conflict" description="In Ref. 1." evidence="3" ref="1">
    <original>SGS</original>
    <variation>IICQDQ</variation>
    <location>
        <begin position="2"/>
        <end position="4"/>
    </location>
</feature>
<feature type="sequence conflict" description="In Ref. 2; AAA79776." evidence="3" ref="2">
    <original>I</original>
    <variation>N</variation>
    <location>
        <position position="25"/>
    </location>
</feature>
<feature type="sequence conflict" description="In Ref. 2; AAA79776." evidence="3" ref="2">
    <original>F</original>
    <variation>L</variation>
    <location>
        <position position="52"/>
    </location>
</feature>
<feature type="sequence conflict" description="In Ref. 2; AAA79776." evidence="3" ref="2">
    <original>PSG</original>
    <variation>LS</variation>
    <location>
        <begin position="85"/>
        <end position="87"/>
    </location>
</feature>
<feature type="sequence conflict" description="In Ref. 1 and 2." evidence="3" ref="1 2">
    <original>EVWGVNGLVNGKLKK</original>
    <variation>WSLRCKRLS</variation>
    <location>
        <begin position="110"/>
        <end position="124"/>
    </location>
</feature>
<gene>
    <name evidence="1" type="primary">ureB</name>
</gene>
<comment type="catalytic activity">
    <reaction evidence="1">
        <text>urea + 2 H2O + H(+) = hydrogencarbonate + 2 NH4(+)</text>
        <dbReference type="Rhea" id="RHEA:20557"/>
        <dbReference type="ChEBI" id="CHEBI:15377"/>
        <dbReference type="ChEBI" id="CHEBI:15378"/>
        <dbReference type="ChEBI" id="CHEBI:16199"/>
        <dbReference type="ChEBI" id="CHEBI:17544"/>
        <dbReference type="ChEBI" id="CHEBI:28938"/>
        <dbReference type="EC" id="3.5.1.5"/>
    </reaction>
</comment>
<comment type="pathway">
    <text evidence="1">Nitrogen metabolism; urea degradation; CO(2) and NH(3) from urea (urease route): step 1/1.</text>
</comment>
<comment type="subunit">
    <text evidence="1">Heterotrimer of UreA (gamma), UreB (beta) and UreC (alpha) subunits. Three heterotrimers associate to form the active enzyme.</text>
</comment>
<comment type="subcellular location">
    <subcellularLocation>
        <location evidence="1">Cytoplasm</location>
    </subcellularLocation>
</comment>
<comment type="similarity">
    <text evidence="1">Belongs to the urease beta subunit family.</text>
</comment>